<keyword id="KW-0021">Allosteric enzyme</keyword>
<keyword id="KW-0119">Carbohydrate metabolism</keyword>
<keyword id="KW-1015">Disulfide bond</keyword>
<keyword id="KW-0378">Hydrolase</keyword>
<accession>B7M5J6</accession>
<protein>
    <recommendedName>
        <fullName evidence="1">Glucosamine-6-phosphate deaminase</fullName>
        <ecNumber evidence="1">3.5.99.6</ecNumber>
    </recommendedName>
    <alternativeName>
        <fullName evidence="1">GlcN6P deaminase</fullName>
        <shortName evidence="1">GNPDA</shortName>
    </alternativeName>
    <alternativeName>
        <fullName evidence="1">Glucosamine-6-phosphate isomerase</fullName>
    </alternativeName>
</protein>
<gene>
    <name evidence="1" type="primary">nagB</name>
    <name type="ordered locus">ECIAI1_0656</name>
</gene>
<comment type="function">
    <text evidence="1">Catalyzes the reversible isomerization-deamination of glucosamine 6-phosphate (GlcN6P) to form fructose 6-phosphate (Fru6P) and ammonium ion.</text>
</comment>
<comment type="catalytic activity">
    <reaction evidence="1">
        <text>alpha-D-glucosamine 6-phosphate + H2O = beta-D-fructose 6-phosphate + NH4(+)</text>
        <dbReference type="Rhea" id="RHEA:12172"/>
        <dbReference type="ChEBI" id="CHEBI:15377"/>
        <dbReference type="ChEBI" id="CHEBI:28938"/>
        <dbReference type="ChEBI" id="CHEBI:57634"/>
        <dbReference type="ChEBI" id="CHEBI:75989"/>
        <dbReference type="EC" id="3.5.99.6"/>
    </reaction>
</comment>
<comment type="activity regulation">
    <text evidence="1">Allosterically activated by N-acetylglucosamine 6-phosphate (GlcNAc6P).</text>
</comment>
<comment type="pathway">
    <text evidence="1">Amino-sugar metabolism; N-acetylneuraminate degradation; D-fructose 6-phosphate from N-acetylneuraminate: step 5/5.</text>
</comment>
<comment type="subunit">
    <text evidence="1">Homohexamer; trimer of disulfide-linked dimers.</text>
</comment>
<comment type="similarity">
    <text evidence="1">Belongs to the glucosamine/galactosamine-6-phosphate isomerase family. NagB subfamily.</text>
</comment>
<organism>
    <name type="scientific">Escherichia coli O8 (strain IAI1)</name>
    <dbReference type="NCBI Taxonomy" id="585034"/>
    <lineage>
        <taxon>Bacteria</taxon>
        <taxon>Pseudomonadati</taxon>
        <taxon>Pseudomonadota</taxon>
        <taxon>Gammaproteobacteria</taxon>
        <taxon>Enterobacterales</taxon>
        <taxon>Enterobacteriaceae</taxon>
        <taxon>Escherichia</taxon>
    </lineage>
</organism>
<evidence type="ECO:0000255" key="1">
    <source>
        <dbReference type="HAMAP-Rule" id="MF_01241"/>
    </source>
</evidence>
<feature type="chain" id="PRO_1000139771" description="Glucosamine-6-phosphate deaminase">
    <location>
        <begin position="1"/>
        <end position="266"/>
    </location>
</feature>
<feature type="active site" description="Proton acceptor; for enolization step" evidence="1">
    <location>
        <position position="72"/>
    </location>
</feature>
<feature type="active site" description="For ring-opening step" evidence="1">
    <location>
        <position position="141"/>
    </location>
</feature>
<feature type="active site" description="Proton acceptor; for ring-opening step" evidence="1">
    <location>
        <position position="143"/>
    </location>
</feature>
<feature type="active site" description="For ring-opening step" evidence="1">
    <location>
        <position position="148"/>
    </location>
</feature>
<feature type="site" description="Part of the allosteric site" evidence="1">
    <location>
        <position position="151"/>
    </location>
</feature>
<feature type="site" description="Part of the allosteric site" evidence="1">
    <location>
        <position position="158"/>
    </location>
</feature>
<feature type="site" description="Part of the allosteric site" evidence="1">
    <location>
        <position position="160"/>
    </location>
</feature>
<feature type="site" description="Part of the allosteric site" evidence="1">
    <location>
        <position position="161"/>
    </location>
</feature>
<feature type="site" description="Part of the allosteric site" evidence="1">
    <location>
        <position position="254"/>
    </location>
</feature>
<feature type="disulfide bond" description="Interchain" evidence="1">
    <location>
        <position position="219"/>
    </location>
</feature>
<reference key="1">
    <citation type="journal article" date="2009" name="PLoS Genet.">
        <title>Organised genome dynamics in the Escherichia coli species results in highly diverse adaptive paths.</title>
        <authorList>
            <person name="Touchon M."/>
            <person name="Hoede C."/>
            <person name="Tenaillon O."/>
            <person name="Barbe V."/>
            <person name="Baeriswyl S."/>
            <person name="Bidet P."/>
            <person name="Bingen E."/>
            <person name="Bonacorsi S."/>
            <person name="Bouchier C."/>
            <person name="Bouvet O."/>
            <person name="Calteau A."/>
            <person name="Chiapello H."/>
            <person name="Clermont O."/>
            <person name="Cruveiller S."/>
            <person name="Danchin A."/>
            <person name="Diard M."/>
            <person name="Dossat C."/>
            <person name="Karoui M.E."/>
            <person name="Frapy E."/>
            <person name="Garry L."/>
            <person name="Ghigo J.M."/>
            <person name="Gilles A.M."/>
            <person name="Johnson J."/>
            <person name="Le Bouguenec C."/>
            <person name="Lescat M."/>
            <person name="Mangenot S."/>
            <person name="Martinez-Jehanne V."/>
            <person name="Matic I."/>
            <person name="Nassif X."/>
            <person name="Oztas S."/>
            <person name="Petit M.A."/>
            <person name="Pichon C."/>
            <person name="Rouy Z."/>
            <person name="Ruf C.S."/>
            <person name="Schneider D."/>
            <person name="Tourret J."/>
            <person name="Vacherie B."/>
            <person name="Vallenet D."/>
            <person name="Medigue C."/>
            <person name="Rocha E.P.C."/>
            <person name="Denamur E."/>
        </authorList>
    </citation>
    <scope>NUCLEOTIDE SEQUENCE [LARGE SCALE GENOMIC DNA]</scope>
    <source>
        <strain>IAI1</strain>
    </source>
</reference>
<name>NAGB_ECO8A</name>
<sequence length="266" mass="29774">MRLIPLTTAEQVGKWAARHIVNRINAFKPTADRPFVLGLPTGGTPMTTYKALVEMHKAGQVSFKHVVTFNMDEYVGLPKEHPESYYSFMHRNFFDHVDIPAENINLLNGNAPDIDAECRQYEEKIRSYGKIHLFMGGVGNDGHIAFNEPASSLASRTRIKTLTHDTRVANSRFFDNDVNQVPKYALTVGVGTLLDAEEVMILVLGSQKALALQAAVEGCVNHMWTISCLQLHPKAIMVCDEPSTMELKVKTLRYFNELEAENIKGL</sequence>
<proteinExistence type="inferred from homology"/>
<dbReference type="EC" id="3.5.99.6" evidence="1"/>
<dbReference type="EMBL" id="CU928160">
    <property type="protein sequence ID" value="CAQ97524.1"/>
    <property type="molecule type" value="Genomic_DNA"/>
</dbReference>
<dbReference type="RefSeq" id="WP_001237072.1">
    <property type="nucleotide sequence ID" value="NC_011741.1"/>
</dbReference>
<dbReference type="SMR" id="B7M5J6"/>
<dbReference type="GeneID" id="93776807"/>
<dbReference type="KEGG" id="ecr:ECIAI1_0656"/>
<dbReference type="HOGENOM" id="CLU_049611_0_1_6"/>
<dbReference type="UniPathway" id="UPA00629">
    <property type="reaction ID" value="UER00684"/>
</dbReference>
<dbReference type="GO" id="GO:0005829">
    <property type="term" value="C:cytosol"/>
    <property type="evidence" value="ECO:0007669"/>
    <property type="project" value="TreeGrafter"/>
</dbReference>
<dbReference type="GO" id="GO:0004342">
    <property type="term" value="F:glucosamine-6-phosphate deaminase activity"/>
    <property type="evidence" value="ECO:0007669"/>
    <property type="project" value="UniProtKB-UniRule"/>
</dbReference>
<dbReference type="GO" id="GO:0042802">
    <property type="term" value="F:identical protein binding"/>
    <property type="evidence" value="ECO:0007669"/>
    <property type="project" value="TreeGrafter"/>
</dbReference>
<dbReference type="GO" id="GO:0005975">
    <property type="term" value="P:carbohydrate metabolic process"/>
    <property type="evidence" value="ECO:0007669"/>
    <property type="project" value="InterPro"/>
</dbReference>
<dbReference type="GO" id="GO:0006043">
    <property type="term" value="P:glucosamine catabolic process"/>
    <property type="evidence" value="ECO:0007669"/>
    <property type="project" value="TreeGrafter"/>
</dbReference>
<dbReference type="GO" id="GO:0006046">
    <property type="term" value="P:N-acetylglucosamine catabolic process"/>
    <property type="evidence" value="ECO:0007669"/>
    <property type="project" value="TreeGrafter"/>
</dbReference>
<dbReference type="GO" id="GO:0019262">
    <property type="term" value="P:N-acetylneuraminate catabolic process"/>
    <property type="evidence" value="ECO:0007669"/>
    <property type="project" value="UniProtKB-UniRule"/>
</dbReference>
<dbReference type="CDD" id="cd01399">
    <property type="entry name" value="GlcN6P_deaminase"/>
    <property type="match status" value="1"/>
</dbReference>
<dbReference type="FunFam" id="3.40.50.1360:FF:000002">
    <property type="entry name" value="Glucosamine-6-phosphate deaminase"/>
    <property type="match status" value="1"/>
</dbReference>
<dbReference type="Gene3D" id="3.40.50.1360">
    <property type="match status" value="1"/>
</dbReference>
<dbReference type="HAMAP" id="MF_01241">
    <property type="entry name" value="GlcN6P_deamin"/>
    <property type="match status" value="1"/>
</dbReference>
<dbReference type="InterPro" id="IPR006148">
    <property type="entry name" value="Glc/Gal-6P_isomerase"/>
</dbReference>
<dbReference type="InterPro" id="IPR004547">
    <property type="entry name" value="Glucosamine6P_isomerase"/>
</dbReference>
<dbReference type="InterPro" id="IPR018321">
    <property type="entry name" value="Glucosamine6P_isomerase_CS"/>
</dbReference>
<dbReference type="InterPro" id="IPR037171">
    <property type="entry name" value="NagB/RpiA_transferase-like"/>
</dbReference>
<dbReference type="NCBIfam" id="TIGR00502">
    <property type="entry name" value="nagB"/>
    <property type="match status" value="1"/>
</dbReference>
<dbReference type="NCBIfam" id="NF001685">
    <property type="entry name" value="PRK00443.1-5"/>
    <property type="match status" value="1"/>
</dbReference>
<dbReference type="PANTHER" id="PTHR11280">
    <property type="entry name" value="GLUCOSAMINE-6-PHOSPHATE ISOMERASE"/>
    <property type="match status" value="1"/>
</dbReference>
<dbReference type="PANTHER" id="PTHR11280:SF5">
    <property type="entry name" value="GLUCOSAMINE-6-PHOSPHATE ISOMERASE"/>
    <property type="match status" value="1"/>
</dbReference>
<dbReference type="Pfam" id="PF01182">
    <property type="entry name" value="Glucosamine_iso"/>
    <property type="match status" value="1"/>
</dbReference>
<dbReference type="SUPFAM" id="SSF100950">
    <property type="entry name" value="NagB/RpiA/CoA transferase-like"/>
    <property type="match status" value="1"/>
</dbReference>
<dbReference type="PROSITE" id="PS01161">
    <property type="entry name" value="GLC_GALNAC_ISOMERASE"/>
    <property type="match status" value="1"/>
</dbReference>